<sequence>MMRTHEAGSLRAGHAGQSVTLAGWVARRRDHGGVIFIDLRDASGVAQVVFREGEMAERAHRLRSEFCLRITGEVVRRPEGNENPEIGTGDIEVTATELEVLSESAPLPFPLDEHLEVGEETRLRHRYLDLRRNGPAKAMRMRSEVNRIARDVLHGRDFVEVETPTMTRSTPEGARDFLIPARLQPGNWYALPQSPQLFKQLLMVGGLERYFQIARCYRDEDFRADRQPEFTQLDIEMSFVDQDDVIELGEEIISALWRETAGHEIPRPIQRMTYADAMARFGTDKPDLRFGLELTEMTEYFADTPFRVFRAPYVGAVVMPGGADQPRRQLDAWQDWAKQRGAKGLAYVLVGQDGTLSGPVAKNLSDGERDGLVKAVGAAPGDCVFFAAGDRSSSRALLGAARLEIGERCGLIDHDAWSFVWVVDAPMFESIDDTDDVAVGSGRWTAVHHPFTSPNADWVDNFESDPANALAWAYDIVCNGNEIGGGSIRIHRSDVQKRVFELLGISEEQAQDKFGFLLEAFKYGPPPHGGIAFGWDRICMLLAGADSLRDVIAFPKSGGGYDPLTGAPSPITVEQRKEAGVDAKPAAKVGDESISVFPPGVVEKQG</sequence>
<accession>A4FBC3</accession>
<gene>
    <name evidence="1" type="primary">aspS</name>
    <name type="ordered locus">SACE_2041</name>
</gene>
<dbReference type="EC" id="6.1.1.23" evidence="1"/>
<dbReference type="EMBL" id="AM420293">
    <property type="protein sequence ID" value="CAM01348.1"/>
    <property type="molecule type" value="Genomic_DNA"/>
</dbReference>
<dbReference type="RefSeq" id="WP_011873543.1">
    <property type="nucleotide sequence ID" value="NC_009142.1"/>
</dbReference>
<dbReference type="SMR" id="A4FBC3"/>
<dbReference type="STRING" id="405948.SACE_2041"/>
<dbReference type="KEGG" id="sen:SACE_2041"/>
<dbReference type="eggNOG" id="COG0173">
    <property type="taxonomic scope" value="Bacteria"/>
</dbReference>
<dbReference type="HOGENOM" id="CLU_014330_3_2_11"/>
<dbReference type="OrthoDB" id="9802326at2"/>
<dbReference type="Proteomes" id="UP000006728">
    <property type="component" value="Chromosome"/>
</dbReference>
<dbReference type="GO" id="GO:0005737">
    <property type="term" value="C:cytoplasm"/>
    <property type="evidence" value="ECO:0007669"/>
    <property type="project" value="UniProtKB-SubCell"/>
</dbReference>
<dbReference type="GO" id="GO:0004815">
    <property type="term" value="F:aspartate-tRNA ligase activity"/>
    <property type="evidence" value="ECO:0007669"/>
    <property type="project" value="UniProtKB-UniRule"/>
</dbReference>
<dbReference type="GO" id="GO:0050560">
    <property type="term" value="F:aspartate-tRNA(Asn) ligase activity"/>
    <property type="evidence" value="ECO:0007669"/>
    <property type="project" value="UniProtKB-EC"/>
</dbReference>
<dbReference type="GO" id="GO:0005524">
    <property type="term" value="F:ATP binding"/>
    <property type="evidence" value="ECO:0007669"/>
    <property type="project" value="UniProtKB-UniRule"/>
</dbReference>
<dbReference type="GO" id="GO:0003676">
    <property type="term" value="F:nucleic acid binding"/>
    <property type="evidence" value="ECO:0007669"/>
    <property type="project" value="InterPro"/>
</dbReference>
<dbReference type="GO" id="GO:0006422">
    <property type="term" value="P:aspartyl-tRNA aminoacylation"/>
    <property type="evidence" value="ECO:0007669"/>
    <property type="project" value="UniProtKB-UniRule"/>
</dbReference>
<dbReference type="CDD" id="cd00777">
    <property type="entry name" value="AspRS_core"/>
    <property type="match status" value="1"/>
</dbReference>
<dbReference type="CDD" id="cd04317">
    <property type="entry name" value="EcAspRS_like_N"/>
    <property type="match status" value="1"/>
</dbReference>
<dbReference type="Gene3D" id="3.30.930.10">
    <property type="entry name" value="Bira Bifunctional Protein, Domain 2"/>
    <property type="match status" value="1"/>
</dbReference>
<dbReference type="Gene3D" id="3.30.1360.30">
    <property type="entry name" value="GAD-like domain"/>
    <property type="match status" value="1"/>
</dbReference>
<dbReference type="Gene3D" id="2.40.50.140">
    <property type="entry name" value="Nucleic acid-binding proteins"/>
    <property type="match status" value="1"/>
</dbReference>
<dbReference type="HAMAP" id="MF_00044">
    <property type="entry name" value="Asp_tRNA_synth_type1"/>
    <property type="match status" value="1"/>
</dbReference>
<dbReference type="InterPro" id="IPR004364">
    <property type="entry name" value="Aa-tRNA-synt_II"/>
</dbReference>
<dbReference type="InterPro" id="IPR006195">
    <property type="entry name" value="aa-tRNA-synth_II"/>
</dbReference>
<dbReference type="InterPro" id="IPR045864">
    <property type="entry name" value="aa-tRNA-synth_II/BPL/LPL"/>
</dbReference>
<dbReference type="InterPro" id="IPR004524">
    <property type="entry name" value="Asp-tRNA-ligase_1"/>
</dbReference>
<dbReference type="InterPro" id="IPR047089">
    <property type="entry name" value="Asp-tRNA-ligase_1_N"/>
</dbReference>
<dbReference type="InterPro" id="IPR002312">
    <property type="entry name" value="Asp/Asn-tRNA-synth_IIb"/>
</dbReference>
<dbReference type="InterPro" id="IPR047090">
    <property type="entry name" value="AspRS_core"/>
</dbReference>
<dbReference type="InterPro" id="IPR004115">
    <property type="entry name" value="GAD-like_sf"/>
</dbReference>
<dbReference type="InterPro" id="IPR029351">
    <property type="entry name" value="GAD_dom"/>
</dbReference>
<dbReference type="InterPro" id="IPR012340">
    <property type="entry name" value="NA-bd_OB-fold"/>
</dbReference>
<dbReference type="InterPro" id="IPR004365">
    <property type="entry name" value="NA-bd_OB_tRNA"/>
</dbReference>
<dbReference type="NCBIfam" id="TIGR00459">
    <property type="entry name" value="aspS_bact"/>
    <property type="match status" value="1"/>
</dbReference>
<dbReference type="NCBIfam" id="NF001750">
    <property type="entry name" value="PRK00476.1"/>
    <property type="match status" value="1"/>
</dbReference>
<dbReference type="PANTHER" id="PTHR22594:SF5">
    <property type="entry name" value="ASPARTATE--TRNA LIGASE, MITOCHONDRIAL"/>
    <property type="match status" value="1"/>
</dbReference>
<dbReference type="PANTHER" id="PTHR22594">
    <property type="entry name" value="ASPARTYL/LYSYL-TRNA SYNTHETASE"/>
    <property type="match status" value="1"/>
</dbReference>
<dbReference type="Pfam" id="PF02938">
    <property type="entry name" value="GAD"/>
    <property type="match status" value="1"/>
</dbReference>
<dbReference type="Pfam" id="PF00152">
    <property type="entry name" value="tRNA-synt_2"/>
    <property type="match status" value="1"/>
</dbReference>
<dbReference type="Pfam" id="PF01336">
    <property type="entry name" value="tRNA_anti-codon"/>
    <property type="match status" value="1"/>
</dbReference>
<dbReference type="PRINTS" id="PR01042">
    <property type="entry name" value="TRNASYNTHASP"/>
</dbReference>
<dbReference type="SUPFAM" id="SSF55681">
    <property type="entry name" value="Class II aaRS and biotin synthetases"/>
    <property type="match status" value="1"/>
</dbReference>
<dbReference type="SUPFAM" id="SSF55261">
    <property type="entry name" value="GAD domain-like"/>
    <property type="match status" value="1"/>
</dbReference>
<dbReference type="SUPFAM" id="SSF50249">
    <property type="entry name" value="Nucleic acid-binding proteins"/>
    <property type="match status" value="1"/>
</dbReference>
<dbReference type="PROSITE" id="PS50862">
    <property type="entry name" value="AA_TRNA_LIGASE_II"/>
    <property type="match status" value="1"/>
</dbReference>
<comment type="function">
    <text evidence="1">Aspartyl-tRNA synthetase with relaxed tRNA specificity since it is able to aspartylate not only its cognate tRNA(Asp) but also tRNA(Asn). Reaction proceeds in two steps: L-aspartate is first activated by ATP to form Asp-AMP and then transferred to the acceptor end of tRNA(Asp/Asn).</text>
</comment>
<comment type="catalytic activity">
    <reaction evidence="1">
        <text>tRNA(Asx) + L-aspartate + ATP = L-aspartyl-tRNA(Asx) + AMP + diphosphate</text>
        <dbReference type="Rhea" id="RHEA:18349"/>
        <dbReference type="Rhea" id="RHEA-COMP:9710"/>
        <dbReference type="Rhea" id="RHEA-COMP:9711"/>
        <dbReference type="ChEBI" id="CHEBI:29991"/>
        <dbReference type="ChEBI" id="CHEBI:30616"/>
        <dbReference type="ChEBI" id="CHEBI:33019"/>
        <dbReference type="ChEBI" id="CHEBI:78442"/>
        <dbReference type="ChEBI" id="CHEBI:78516"/>
        <dbReference type="ChEBI" id="CHEBI:456215"/>
        <dbReference type="EC" id="6.1.1.23"/>
    </reaction>
</comment>
<comment type="subunit">
    <text evidence="1">Homodimer.</text>
</comment>
<comment type="subcellular location">
    <subcellularLocation>
        <location evidence="1">Cytoplasm</location>
    </subcellularLocation>
</comment>
<comment type="similarity">
    <text evidence="1">Belongs to the class-II aminoacyl-tRNA synthetase family. Type 1 subfamily.</text>
</comment>
<reference key="1">
    <citation type="journal article" date="2007" name="Nat. Biotechnol.">
        <title>Complete genome sequence of the erythromycin-producing bacterium Saccharopolyspora erythraea NRRL23338.</title>
        <authorList>
            <person name="Oliynyk M."/>
            <person name="Samborskyy M."/>
            <person name="Lester J.B."/>
            <person name="Mironenko T."/>
            <person name="Scott N."/>
            <person name="Dickens S."/>
            <person name="Haydock S.F."/>
            <person name="Leadlay P.F."/>
        </authorList>
    </citation>
    <scope>NUCLEOTIDE SEQUENCE [LARGE SCALE GENOMIC DNA]</scope>
    <source>
        <strain>ATCC 11635 / DSM 40517 / JCM 4748 / NBRC 13426 / NCIMB 8594 / NRRL 2338</strain>
    </source>
</reference>
<organism>
    <name type="scientific">Saccharopolyspora erythraea (strain ATCC 11635 / DSM 40517 / JCM 4748 / NBRC 13426 / NCIMB 8594 / NRRL 2338)</name>
    <dbReference type="NCBI Taxonomy" id="405948"/>
    <lineage>
        <taxon>Bacteria</taxon>
        <taxon>Bacillati</taxon>
        <taxon>Actinomycetota</taxon>
        <taxon>Actinomycetes</taxon>
        <taxon>Pseudonocardiales</taxon>
        <taxon>Pseudonocardiaceae</taxon>
        <taxon>Saccharopolyspora</taxon>
    </lineage>
</organism>
<evidence type="ECO:0000255" key="1">
    <source>
        <dbReference type="HAMAP-Rule" id="MF_00044"/>
    </source>
</evidence>
<keyword id="KW-0030">Aminoacyl-tRNA synthetase</keyword>
<keyword id="KW-0067">ATP-binding</keyword>
<keyword id="KW-0963">Cytoplasm</keyword>
<keyword id="KW-0436">Ligase</keyword>
<keyword id="KW-0547">Nucleotide-binding</keyword>
<keyword id="KW-0648">Protein biosynthesis</keyword>
<keyword id="KW-1185">Reference proteome</keyword>
<proteinExistence type="inferred from homology"/>
<protein>
    <recommendedName>
        <fullName evidence="1">Aspartate--tRNA(Asp/Asn) ligase</fullName>
        <ecNumber evidence="1">6.1.1.23</ecNumber>
    </recommendedName>
    <alternativeName>
        <fullName evidence="1">Aspartyl-tRNA synthetase</fullName>
        <shortName evidence="1">AspRS</shortName>
    </alternativeName>
    <alternativeName>
        <fullName evidence="1">Non-discriminating aspartyl-tRNA synthetase</fullName>
        <shortName evidence="1">ND-AspRS</shortName>
    </alternativeName>
</protein>
<feature type="chain" id="PRO_1000006751" description="Aspartate--tRNA(Asp/Asn) ligase">
    <location>
        <begin position="1"/>
        <end position="606"/>
    </location>
</feature>
<feature type="region of interest" description="Aspartate" evidence="1">
    <location>
        <begin position="196"/>
        <end position="199"/>
    </location>
</feature>
<feature type="binding site" evidence="1">
    <location>
        <position position="172"/>
    </location>
    <ligand>
        <name>L-aspartate</name>
        <dbReference type="ChEBI" id="CHEBI:29991"/>
    </ligand>
</feature>
<feature type="binding site" evidence="1">
    <location>
        <begin position="218"/>
        <end position="220"/>
    </location>
    <ligand>
        <name>ATP</name>
        <dbReference type="ChEBI" id="CHEBI:30616"/>
    </ligand>
</feature>
<feature type="binding site" evidence="1">
    <location>
        <position position="218"/>
    </location>
    <ligand>
        <name>L-aspartate</name>
        <dbReference type="ChEBI" id="CHEBI:29991"/>
    </ligand>
</feature>
<feature type="binding site" evidence="1">
    <location>
        <position position="227"/>
    </location>
    <ligand>
        <name>ATP</name>
        <dbReference type="ChEBI" id="CHEBI:30616"/>
    </ligand>
</feature>
<feature type="binding site" evidence="1">
    <location>
        <position position="448"/>
    </location>
    <ligand>
        <name>L-aspartate</name>
        <dbReference type="ChEBI" id="CHEBI:29991"/>
    </ligand>
</feature>
<feature type="binding site" evidence="1">
    <location>
        <position position="482"/>
    </location>
    <ligand>
        <name>ATP</name>
        <dbReference type="ChEBI" id="CHEBI:30616"/>
    </ligand>
</feature>
<feature type="binding site" evidence="1">
    <location>
        <position position="489"/>
    </location>
    <ligand>
        <name>L-aspartate</name>
        <dbReference type="ChEBI" id="CHEBI:29991"/>
    </ligand>
</feature>
<feature type="binding site" evidence="1">
    <location>
        <begin position="534"/>
        <end position="537"/>
    </location>
    <ligand>
        <name>ATP</name>
        <dbReference type="ChEBI" id="CHEBI:30616"/>
    </ligand>
</feature>
<feature type="site" description="Important for tRNA non-discrimination" evidence="1">
    <location>
        <position position="31"/>
    </location>
</feature>
<feature type="site" description="Important for tRNA non-discrimination" evidence="1">
    <location>
        <position position="80"/>
    </location>
</feature>
<name>SYDND_SACEN</name>